<sequence>MTKFTTEEVRSKFITYFKANNHTHVPASSLIPHNDPSLMFVNSGMVQFKNVFTGQEKRPYNKAVTSQKSLRAGGKHNDLENVGYTARHHTFFEMLGNFSFGDYFKEQAIYYAWNLLTKEFELPKDKLYVTVYHTDEEAASYWKKIAGFRDDRIIRIKTNDNFWSMGDTGPCGPCSEIFYDHGEQIYGGLPGTKDEDGDRFIEIWNMVFMQYEQIDKDTRIELPQKSIDTGMGLERMTAVLQHVNNNYDIDLFQEIINFTENIVKVKIEGEAKFSYRVIADHLRASSFLIADGVIPSNEGRGYVLRRIMRRAMRHAHMLGSKEPLMYKLLPKLVDLMGNVYPELKRAESFISSILEQEEIRFKTTLERGLKLLTEETETLTKGNELSGEIAFKLYDTYGFPLDLTEDILKNRDISVDHKRFEEQMLAQKERARKSWLGSGESKTDQLWFDIKEQHGSTEFLGYTLNEAECKIIALIKDNNLVNDIKEIDTQFLLISNQTPFYGESGGQMGDIGMIFSKDSEIEVIDTLKYLGSIIVHKCILKKGQIKIGENANFSIDIKYRQNLRIHHSATHILHAVLHEVLGKHVTQKGSLVAPTYLRFDISHSKAVTNEEITLIEDKVNEIIRDNHEVDTTLMTTEDAVKQGAMALFGEKYDSEVRVVKMGETSLELCGGTHVRRTGDIGCFKITSESAIAAGVRRIEAVCGEFVIKLMREKDSLLKSIESSLKTNKNELITKVNNILERNKELEKELEKVHLARLDLSIEQIEKQAEDIKGVKLIYRYIENLDNKVLRQAAENLTKKVEDLIVVYITGNNDKLSITVAVSKAITDKYKAGIIAKELSLFLGGSGGGGQASLAQAGGNDIGKLTNIQEKLHGLLTVS</sequence>
<gene>
    <name evidence="1" type="primary">alaS</name>
    <name type="ordered locus">RF_1353</name>
</gene>
<feature type="chain" id="PRO_0000075191" description="Alanine--tRNA ligase">
    <location>
        <begin position="1"/>
        <end position="878"/>
    </location>
</feature>
<feature type="binding site" evidence="1">
    <location>
        <position position="567"/>
    </location>
    <ligand>
        <name>Zn(2+)</name>
        <dbReference type="ChEBI" id="CHEBI:29105"/>
    </ligand>
</feature>
<feature type="binding site" evidence="1">
    <location>
        <position position="571"/>
    </location>
    <ligand>
        <name>Zn(2+)</name>
        <dbReference type="ChEBI" id="CHEBI:29105"/>
    </ligand>
</feature>
<feature type="binding site" evidence="1">
    <location>
        <position position="669"/>
    </location>
    <ligand>
        <name>Zn(2+)</name>
        <dbReference type="ChEBI" id="CHEBI:29105"/>
    </ligand>
</feature>
<feature type="binding site" evidence="1">
    <location>
        <position position="673"/>
    </location>
    <ligand>
        <name>Zn(2+)</name>
        <dbReference type="ChEBI" id="CHEBI:29105"/>
    </ligand>
</feature>
<accession>Q4UJT5</accession>
<organism>
    <name type="scientific">Rickettsia felis (strain ATCC VR-1525 / URRWXCal2)</name>
    <name type="common">Rickettsia azadi</name>
    <dbReference type="NCBI Taxonomy" id="315456"/>
    <lineage>
        <taxon>Bacteria</taxon>
        <taxon>Pseudomonadati</taxon>
        <taxon>Pseudomonadota</taxon>
        <taxon>Alphaproteobacteria</taxon>
        <taxon>Rickettsiales</taxon>
        <taxon>Rickettsiaceae</taxon>
        <taxon>Rickettsieae</taxon>
        <taxon>Rickettsia</taxon>
        <taxon>spotted fever group</taxon>
    </lineage>
</organism>
<comment type="function">
    <text evidence="1">Catalyzes the attachment of alanine to tRNA(Ala) in a two-step reaction: alanine is first activated by ATP to form Ala-AMP and then transferred to the acceptor end of tRNA(Ala). Also edits incorrectly charged Ser-tRNA(Ala) and Gly-tRNA(Ala) via its editing domain.</text>
</comment>
<comment type="catalytic activity">
    <reaction evidence="1">
        <text>tRNA(Ala) + L-alanine + ATP = L-alanyl-tRNA(Ala) + AMP + diphosphate</text>
        <dbReference type="Rhea" id="RHEA:12540"/>
        <dbReference type="Rhea" id="RHEA-COMP:9657"/>
        <dbReference type="Rhea" id="RHEA-COMP:9923"/>
        <dbReference type="ChEBI" id="CHEBI:30616"/>
        <dbReference type="ChEBI" id="CHEBI:33019"/>
        <dbReference type="ChEBI" id="CHEBI:57972"/>
        <dbReference type="ChEBI" id="CHEBI:78442"/>
        <dbReference type="ChEBI" id="CHEBI:78497"/>
        <dbReference type="ChEBI" id="CHEBI:456215"/>
        <dbReference type="EC" id="6.1.1.7"/>
    </reaction>
</comment>
<comment type="cofactor">
    <cofactor evidence="1">
        <name>Zn(2+)</name>
        <dbReference type="ChEBI" id="CHEBI:29105"/>
    </cofactor>
    <text evidence="1">Binds 1 zinc ion per subunit.</text>
</comment>
<comment type="subcellular location">
    <subcellularLocation>
        <location evidence="1">Cytoplasm</location>
    </subcellularLocation>
</comment>
<comment type="domain">
    <text evidence="1">Consists of three domains; the N-terminal catalytic domain, the editing domain and the C-terminal C-Ala domain. The editing domain removes incorrectly charged amino acids, while the C-Ala domain, along with tRNA(Ala), serves as a bridge to cooperatively bring together the editing and aminoacylation centers thus stimulating deacylation of misacylated tRNAs.</text>
</comment>
<comment type="similarity">
    <text evidence="1">Belongs to the class-II aminoacyl-tRNA synthetase family.</text>
</comment>
<reference key="1">
    <citation type="journal article" date="2005" name="PLoS Biol.">
        <title>The genome sequence of Rickettsia felis identifies the first putative conjugative plasmid in an obligate intracellular parasite.</title>
        <authorList>
            <person name="Ogata H."/>
            <person name="Renesto P."/>
            <person name="Audic S."/>
            <person name="Robert C."/>
            <person name="Blanc G."/>
            <person name="Fournier P.-E."/>
            <person name="Parinello H."/>
            <person name="Claverie J.-M."/>
            <person name="Raoult D."/>
        </authorList>
    </citation>
    <scope>NUCLEOTIDE SEQUENCE [LARGE SCALE GENOMIC DNA]</scope>
    <source>
        <strain>ATCC VR-1525 / URRWXCal2</strain>
    </source>
</reference>
<name>SYA_RICFE</name>
<evidence type="ECO:0000255" key="1">
    <source>
        <dbReference type="HAMAP-Rule" id="MF_00036"/>
    </source>
</evidence>
<proteinExistence type="inferred from homology"/>
<keyword id="KW-0030">Aminoacyl-tRNA synthetase</keyword>
<keyword id="KW-0067">ATP-binding</keyword>
<keyword id="KW-0963">Cytoplasm</keyword>
<keyword id="KW-0436">Ligase</keyword>
<keyword id="KW-0479">Metal-binding</keyword>
<keyword id="KW-0547">Nucleotide-binding</keyword>
<keyword id="KW-0648">Protein biosynthesis</keyword>
<keyword id="KW-0694">RNA-binding</keyword>
<keyword id="KW-0820">tRNA-binding</keyword>
<keyword id="KW-0862">Zinc</keyword>
<dbReference type="EC" id="6.1.1.7" evidence="1"/>
<dbReference type="EMBL" id="CP000053">
    <property type="protein sequence ID" value="AAY62204.1"/>
    <property type="molecule type" value="Genomic_DNA"/>
</dbReference>
<dbReference type="SMR" id="Q4UJT5"/>
<dbReference type="STRING" id="315456.RF_1353"/>
<dbReference type="KEGG" id="rfe:RF_1353"/>
<dbReference type="eggNOG" id="COG0013">
    <property type="taxonomic scope" value="Bacteria"/>
</dbReference>
<dbReference type="HOGENOM" id="CLU_004485_1_1_5"/>
<dbReference type="OrthoDB" id="9803884at2"/>
<dbReference type="Proteomes" id="UP000008548">
    <property type="component" value="Chromosome"/>
</dbReference>
<dbReference type="GO" id="GO:0005829">
    <property type="term" value="C:cytosol"/>
    <property type="evidence" value="ECO:0007669"/>
    <property type="project" value="TreeGrafter"/>
</dbReference>
<dbReference type="GO" id="GO:0004813">
    <property type="term" value="F:alanine-tRNA ligase activity"/>
    <property type="evidence" value="ECO:0007669"/>
    <property type="project" value="UniProtKB-UniRule"/>
</dbReference>
<dbReference type="GO" id="GO:0002161">
    <property type="term" value="F:aminoacyl-tRNA deacylase activity"/>
    <property type="evidence" value="ECO:0007669"/>
    <property type="project" value="TreeGrafter"/>
</dbReference>
<dbReference type="GO" id="GO:0005524">
    <property type="term" value="F:ATP binding"/>
    <property type="evidence" value="ECO:0007669"/>
    <property type="project" value="UniProtKB-UniRule"/>
</dbReference>
<dbReference type="GO" id="GO:0000049">
    <property type="term" value="F:tRNA binding"/>
    <property type="evidence" value="ECO:0007669"/>
    <property type="project" value="UniProtKB-KW"/>
</dbReference>
<dbReference type="GO" id="GO:0008270">
    <property type="term" value="F:zinc ion binding"/>
    <property type="evidence" value="ECO:0007669"/>
    <property type="project" value="UniProtKB-UniRule"/>
</dbReference>
<dbReference type="GO" id="GO:0006419">
    <property type="term" value="P:alanyl-tRNA aminoacylation"/>
    <property type="evidence" value="ECO:0007669"/>
    <property type="project" value="UniProtKB-UniRule"/>
</dbReference>
<dbReference type="GO" id="GO:0045892">
    <property type="term" value="P:negative regulation of DNA-templated transcription"/>
    <property type="evidence" value="ECO:0007669"/>
    <property type="project" value="TreeGrafter"/>
</dbReference>
<dbReference type="CDD" id="cd00673">
    <property type="entry name" value="AlaRS_core"/>
    <property type="match status" value="1"/>
</dbReference>
<dbReference type="FunFam" id="3.10.310.40:FF:000001">
    <property type="entry name" value="Alanine--tRNA ligase"/>
    <property type="match status" value="1"/>
</dbReference>
<dbReference type="FunFam" id="3.30.54.20:FF:000001">
    <property type="entry name" value="Alanine--tRNA ligase"/>
    <property type="match status" value="1"/>
</dbReference>
<dbReference type="FunFam" id="3.30.930.10:FF:000004">
    <property type="entry name" value="Alanine--tRNA ligase"/>
    <property type="match status" value="1"/>
</dbReference>
<dbReference type="FunFam" id="3.30.980.10:FF:000004">
    <property type="entry name" value="Alanine--tRNA ligase, cytoplasmic"/>
    <property type="match status" value="1"/>
</dbReference>
<dbReference type="Gene3D" id="2.40.30.130">
    <property type="match status" value="1"/>
</dbReference>
<dbReference type="Gene3D" id="3.10.310.40">
    <property type="match status" value="1"/>
</dbReference>
<dbReference type="Gene3D" id="3.30.54.20">
    <property type="match status" value="1"/>
</dbReference>
<dbReference type="Gene3D" id="6.10.250.550">
    <property type="match status" value="1"/>
</dbReference>
<dbReference type="Gene3D" id="3.30.930.10">
    <property type="entry name" value="Bira Bifunctional Protein, Domain 2"/>
    <property type="match status" value="1"/>
</dbReference>
<dbReference type="Gene3D" id="3.30.980.10">
    <property type="entry name" value="Threonyl-trna Synthetase, Chain A, domain 2"/>
    <property type="match status" value="1"/>
</dbReference>
<dbReference type="HAMAP" id="MF_00036_B">
    <property type="entry name" value="Ala_tRNA_synth_B"/>
    <property type="match status" value="1"/>
</dbReference>
<dbReference type="InterPro" id="IPR045864">
    <property type="entry name" value="aa-tRNA-synth_II/BPL/LPL"/>
</dbReference>
<dbReference type="InterPro" id="IPR002318">
    <property type="entry name" value="Ala-tRNA-lgiase_IIc"/>
</dbReference>
<dbReference type="InterPro" id="IPR018162">
    <property type="entry name" value="Ala-tRNA-ligase_IIc_anticod-bd"/>
</dbReference>
<dbReference type="InterPro" id="IPR018165">
    <property type="entry name" value="Ala-tRNA-synth_IIc_core"/>
</dbReference>
<dbReference type="InterPro" id="IPR018164">
    <property type="entry name" value="Ala-tRNA-synth_IIc_N"/>
</dbReference>
<dbReference type="InterPro" id="IPR050058">
    <property type="entry name" value="Ala-tRNA_ligase"/>
</dbReference>
<dbReference type="InterPro" id="IPR023033">
    <property type="entry name" value="Ala_tRNA_ligase_euk/bac"/>
</dbReference>
<dbReference type="InterPro" id="IPR003156">
    <property type="entry name" value="DHHA1_dom"/>
</dbReference>
<dbReference type="InterPro" id="IPR018163">
    <property type="entry name" value="Thr/Ala-tRNA-synth_IIc_edit"/>
</dbReference>
<dbReference type="InterPro" id="IPR009000">
    <property type="entry name" value="Transl_B-barrel_sf"/>
</dbReference>
<dbReference type="InterPro" id="IPR012947">
    <property type="entry name" value="tRNA_SAD"/>
</dbReference>
<dbReference type="NCBIfam" id="TIGR00344">
    <property type="entry name" value="alaS"/>
    <property type="match status" value="1"/>
</dbReference>
<dbReference type="PANTHER" id="PTHR11777:SF9">
    <property type="entry name" value="ALANINE--TRNA LIGASE, CYTOPLASMIC"/>
    <property type="match status" value="1"/>
</dbReference>
<dbReference type="PANTHER" id="PTHR11777">
    <property type="entry name" value="ALANYL-TRNA SYNTHETASE"/>
    <property type="match status" value="1"/>
</dbReference>
<dbReference type="Pfam" id="PF02272">
    <property type="entry name" value="DHHA1"/>
    <property type="match status" value="1"/>
</dbReference>
<dbReference type="Pfam" id="PF01411">
    <property type="entry name" value="tRNA-synt_2c"/>
    <property type="match status" value="1"/>
</dbReference>
<dbReference type="Pfam" id="PF07973">
    <property type="entry name" value="tRNA_SAD"/>
    <property type="match status" value="1"/>
</dbReference>
<dbReference type="PRINTS" id="PR00980">
    <property type="entry name" value="TRNASYNTHALA"/>
</dbReference>
<dbReference type="SMART" id="SM00863">
    <property type="entry name" value="tRNA_SAD"/>
    <property type="match status" value="1"/>
</dbReference>
<dbReference type="SUPFAM" id="SSF55681">
    <property type="entry name" value="Class II aaRS and biotin synthetases"/>
    <property type="match status" value="1"/>
</dbReference>
<dbReference type="SUPFAM" id="SSF101353">
    <property type="entry name" value="Putative anticodon-binding domain of alanyl-tRNA synthetase (AlaRS)"/>
    <property type="match status" value="1"/>
</dbReference>
<dbReference type="SUPFAM" id="SSF55186">
    <property type="entry name" value="ThrRS/AlaRS common domain"/>
    <property type="match status" value="1"/>
</dbReference>
<dbReference type="SUPFAM" id="SSF50447">
    <property type="entry name" value="Translation proteins"/>
    <property type="match status" value="1"/>
</dbReference>
<dbReference type="PROSITE" id="PS50860">
    <property type="entry name" value="AA_TRNA_LIGASE_II_ALA"/>
    <property type="match status" value="1"/>
</dbReference>
<protein>
    <recommendedName>
        <fullName evidence="1">Alanine--tRNA ligase</fullName>
        <ecNumber evidence="1">6.1.1.7</ecNumber>
    </recommendedName>
    <alternativeName>
        <fullName evidence="1">Alanyl-tRNA synthetase</fullName>
        <shortName evidence="1">AlaRS</shortName>
    </alternativeName>
</protein>